<sequence>MKKAGLLFLVMIVIAVVAAGIGYWKLTGEESDTLRKIVLEQCLPNQQENQNPSPCAEVKPNAGYVVLKDRHGPLQYLLMPTYRINGTESPLLTDPSTPNFFWLAWQARDFMSQKYGQPVPDRAVSLAINSRTGRTQNHFHIHISCIRPDVREQLDNNLANISSRWLPMPGGLRGHEYLARRVTESELVQRSPFMMLAEEVPEAREHMGSYGLAMVRQSDNSFVLLATQRNLLTLNRASAEEIQDHQCEILR</sequence>
<protein>
    <recommendedName>
        <fullName evidence="1">CDP-diacylglycerol pyrophosphatase</fullName>
        <ecNumber evidence="1">3.6.1.26</ecNumber>
    </recommendedName>
    <alternativeName>
        <fullName evidence="1">CDP-diacylglycerol phosphatidylhydrolase</fullName>
    </alternativeName>
    <alternativeName>
        <fullName evidence="1">CDP-diglyceride hydrolase</fullName>
    </alternativeName>
</protein>
<reference key="1">
    <citation type="journal article" date="2009" name="PLoS Genet.">
        <title>Organised genome dynamics in the Escherichia coli species results in highly diverse adaptive paths.</title>
        <authorList>
            <person name="Touchon M."/>
            <person name="Hoede C."/>
            <person name="Tenaillon O."/>
            <person name="Barbe V."/>
            <person name="Baeriswyl S."/>
            <person name="Bidet P."/>
            <person name="Bingen E."/>
            <person name="Bonacorsi S."/>
            <person name="Bouchier C."/>
            <person name="Bouvet O."/>
            <person name="Calteau A."/>
            <person name="Chiapello H."/>
            <person name="Clermont O."/>
            <person name="Cruveiller S."/>
            <person name="Danchin A."/>
            <person name="Diard M."/>
            <person name="Dossat C."/>
            <person name="Karoui M.E."/>
            <person name="Frapy E."/>
            <person name="Garry L."/>
            <person name="Ghigo J.M."/>
            <person name="Gilles A.M."/>
            <person name="Johnson J."/>
            <person name="Le Bouguenec C."/>
            <person name="Lescat M."/>
            <person name="Mangenot S."/>
            <person name="Martinez-Jehanne V."/>
            <person name="Matic I."/>
            <person name="Nassif X."/>
            <person name="Oztas S."/>
            <person name="Petit M.A."/>
            <person name="Pichon C."/>
            <person name="Rouy Z."/>
            <person name="Ruf C.S."/>
            <person name="Schneider D."/>
            <person name="Tourret J."/>
            <person name="Vacherie B."/>
            <person name="Vallenet D."/>
            <person name="Medigue C."/>
            <person name="Rocha E.P.C."/>
            <person name="Denamur E."/>
        </authorList>
    </citation>
    <scope>NUCLEOTIDE SEQUENCE [LARGE SCALE GENOMIC DNA]</scope>
    <source>
        <strain>ED1a</strain>
    </source>
</reference>
<name>CDH_ECO81</name>
<keyword id="KW-0997">Cell inner membrane</keyword>
<keyword id="KW-1003">Cell membrane</keyword>
<keyword id="KW-0378">Hydrolase</keyword>
<keyword id="KW-0444">Lipid biosynthesis</keyword>
<keyword id="KW-0443">Lipid metabolism</keyword>
<keyword id="KW-0472">Membrane</keyword>
<keyword id="KW-0594">Phospholipid biosynthesis</keyword>
<keyword id="KW-1208">Phospholipid metabolism</keyword>
<keyword id="KW-0812">Transmembrane</keyword>
<keyword id="KW-1133">Transmembrane helix</keyword>
<feature type="chain" id="PRO_1000133034" description="CDP-diacylglycerol pyrophosphatase">
    <location>
        <begin position="1"/>
        <end position="251"/>
    </location>
</feature>
<feature type="transmembrane region" description="Helical" evidence="1">
    <location>
        <begin position="4"/>
        <end position="24"/>
    </location>
</feature>
<accession>B7N2Q9</accession>
<evidence type="ECO:0000255" key="1">
    <source>
        <dbReference type="HAMAP-Rule" id="MF_00319"/>
    </source>
</evidence>
<proteinExistence type="inferred from homology"/>
<dbReference type="EC" id="3.6.1.26" evidence="1"/>
<dbReference type="EMBL" id="CU928162">
    <property type="protein sequence ID" value="CAR10728.2"/>
    <property type="molecule type" value="Genomic_DNA"/>
</dbReference>
<dbReference type="RefSeq" id="WP_012601818.1">
    <property type="nucleotide sequence ID" value="NC_011745.1"/>
</dbReference>
<dbReference type="SMR" id="B7N2Q9"/>
<dbReference type="KEGG" id="ecq:ECED1_4620"/>
<dbReference type="HOGENOM" id="CLU_077117_0_1_6"/>
<dbReference type="UniPathway" id="UPA00609">
    <property type="reaction ID" value="UER00664"/>
</dbReference>
<dbReference type="Proteomes" id="UP000000748">
    <property type="component" value="Chromosome"/>
</dbReference>
<dbReference type="GO" id="GO:0005886">
    <property type="term" value="C:plasma membrane"/>
    <property type="evidence" value="ECO:0007669"/>
    <property type="project" value="UniProtKB-SubCell"/>
</dbReference>
<dbReference type="GO" id="GO:0008715">
    <property type="term" value="F:CDP-diacylglycerol diphosphatase activity"/>
    <property type="evidence" value="ECO:0007669"/>
    <property type="project" value="UniProtKB-UniRule"/>
</dbReference>
<dbReference type="GO" id="GO:0046342">
    <property type="term" value="P:CDP-diacylglycerol catabolic process"/>
    <property type="evidence" value="ECO:0007669"/>
    <property type="project" value="UniProtKB-UniRule"/>
</dbReference>
<dbReference type="GO" id="GO:0008654">
    <property type="term" value="P:phospholipid biosynthetic process"/>
    <property type="evidence" value="ECO:0007669"/>
    <property type="project" value="UniProtKB-KW"/>
</dbReference>
<dbReference type="FunFam" id="3.30.428.30:FF:000001">
    <property type="entry name" value="CDP-diacylglycerol pyrophosphatase"/>
    <property type="match status" value="1"/>
</dbReference>
<dbReference type="Gene3D" id="3.30.428.30">
    <property type="entry name" value="HIT family - CDH-like"/>
    <property type="match status" value="1"/>
</dbReference>
<dbReference type="HAMAP" id="MF_00319">
    <property type="entry name" value="Cdh"/>
    <property type="match status" value="1"/>
</dbReference>
<dbReference type="InterPro" id="IPR003763">
    <property type="entry name" value="CDP-diacylglyc_Pase"/>
</dbReference>
<dbReference type="InterPro" id="IPR015993">
    <property type="entry name" value="CDP-diacylglyc_Pase_proteobac"/>
</dbReference>
<dbReference type="InterPro" id="IPR036265">
    <property type="entry name" value="HIT-like_sf"/>
</dbReference>
<dbReference type="NCBIfam" id="TIGR00672">
    <property type="entry name" value="cdh"/>
    <property type="match status" value="1"/>
</dbReference>
<dbReference type="NCBIfam" id="NF003986">
    <property type="entry name" value="PRK05471.1-5"/>
    <property type="match status" value="1"/>
</dbReference>
<dbReference type="NCBIfam" id="NF003987">
    <property type="entry name" value="PRK05471.1-6"/>
    <property type="match status" value="1"/>
</dbReference>
<dbReference type="Pfam" id="PF02611">
    <property type="entry name" value="CDH"/>
    <property type="match status" value="1"/>
</dbReference>
<dbReference type="PIRSF" id="PIRSF001273">
    <property type="entry name" value="CDH"/>
    <property type="match status" value="1"/>
</dbReference>
<dbReference type="SUPFAM" id="SSF54197">
    <property type="entry name" value="HIT-like"/>
    <property type="match status" value="1"/>
</dbReference>
<organism>
    <name type="scientific">Escherichia coli O81 (strain ED1a)</name>
    <dbReference type="NCBI Taxonomy" id="585397"/>
    <lineage>
        <taxon>Bacteria</taxon>
        <taxon>Pseudomonadati</taxon>
        <taxon>Pseudomonadota</taxon>
        <taxon>Gammaproteobacteria</taxon>
        <taxon>Enterobacterales</taxon>
        <taxon>Enterobacteriaceae</taxon>
        <taxon>Escherichia</taxon>
    </lineage>
</organism>
<gene>
    <name evidence="1" type="primary">cdh</name>
    <name type="ordered locus">ECED1_4620</name>
</gene>
<comment type="catalytic activity">
    <reaction evidence="1">
        <text>a CDP-1,2-diacyl-sn-glycerol + H2O = a 1,2-diacyl-sn-glycero-3-phosphate + CMP + 2 H(+)</text>
        <dbReference type="Rhea" id="RHEA:15221"/>
        <dbReference type="ChEBI" id="CHEBI:15377"/>
        <dbReference type="ChEBI" id="CHEBI:15378"/>
        <dbReference type="ChEBI" id="CHEBI:58332"/>
        <dbReference type="ChEBI" id="CHEBI:58608"/>
        <dbReference type="ChEBI" id="CHEBI:60377"/>
        <dbReference type="EC" id="3.6.1.26"/>
    </reaction>
</comment>
<comment type="pathway">
    <text evidence="1">Phospholipid metabolism; CDP-diacylglycerol degradation; phosphatidate from CDP-diacylglycerol: step 1/1.</text>
</comment>
<comment type="subcellular location">
    <subcellularLocation>
        <location evidence="1">Cell inner membrane</location>
        <topology evidence="1">Single-pass membrane protein</topology>
    </subcellularLocation>
</comment>
<comment type="similarity">
    <text evidence="1">Belongs to the Cdh family.</text>
</comment>